<sequence length="144" mass="16199">MDIHEILKYLPHRYPLILVDRVVSLELGKRIHAYKNVSINEPYFSGHFPHHPVMPGVLIVEALAQAAALLTIRSENMEKDAGQVYYFVGIDGVRFKKPVIAGDQLVLKVEITRQLKGIWKYSACAEVDGQLVTEAQLMCTARAI</sequence>
<organism>
    <name type="scientific">Nitrosomonas eutropha (strain DSM 101675 / C91 / Nm57)</name>
    <dbReference type="NCBI Taxonomy" id="335283"/>
    <lineage>
        <taxon>Bacteria</taxon>
        <taxon>Pseudomonadati</taxon>
        <taxon>Pseudomonadota</taxon>
        <taxon>Betaproteobacteria</taxon>
        <taxon>Nitrosomonadales</taxon>
        <taxon>Nitrosomonadaceae</taxon>
        <taxon>Nitrosomonas</taxon>
    </lineage>
</organism>
<feature type="chain" id="PRO_0000340791" description="3-hydroxyacyl-[acyl-carrier-protein] dehydratase FabZ">
    <location>
        <begin position="1"/>
        <end position="144"/>
    </location>
</feature>
<feature type="active site" evidence="1">
    <location>
        <position position="47"/>
    </location>
</feature>
<keyword id="KW-0963">Cytoplasm</keyword>
<keyword id="KW-0441">Lipid A biosynthesis</keyword>
<keyword id="KW-0444">Lipid biosynthesis</keyword>
<keyword id="KW-0443">Lipid metabolism</keyword>
<keyword id="KW-0456">Lyase</keyword>
<comment type="function">
    <text evidence="1">Involved in unsaturated fatty acids biosynthesis. Catalyzes the dehydration of short chain beta-hydroxyacyl-ACPs and long chain saturated and unsaturated beta-hydroxyacyl-ACPs.</text>
</comment>
<comment type="catalytic activity">
    <reaction evidence="1">
        <text>a (3R)-hydroxyacyl-[ACP] = a (2E)-enoyl-[ACP] + H2O</text>
        <dbReference type="Rhea" id="RHEA:13097"/>
        <dbReference type="Rhea" id="RHEA-COMP:9925"/>
        <dbReference type="Rhea" id="RHEA-COMP:9945"/>
        <dbReference type="ChEBI" id="CHEBI:15377"/>
        <dbReference type="ChEBI" id="CHEBI:78784"/>
        <dbReference type="ChEBI" id="CHEBI:78827"/>
        <dbReference type="EC" id="4.2.1.59"/>
    </reaction>
</comment>
<comment type="subcellular location">
    <subcellularLocation>
        <location evidence="1">Cytoplasm</location>
    </subcellularLocation>
</comment>
<comment type="similarity">
    <text evidence="1">Belongs to the thioester dehydratase family. FabZ subfamily.</text>
</comment>
<comment type="sequence caution" evidence="2">
    <conflict type="erroneous initiation">
        <sequence resource="EMBL-CDS" id="ABI60248"/>
    </conflict>
</comment>
<evidence type="ECO:0000255" key="1">
    <source>
        <dbReference type="HAMAP-Rule" id="MF_00406"/>
    </source>
</evidence>
<evidence type="ECO:0000305" key="2"/>
<accession>Q0AEI4</accession>
<reference key="1">
    <citation type="journal article" date="2007" name="Environ. Microbiol.">
        <title>Whole-genome analysis of the ammonia-oxidizing bacterium, Nitrosomonas eutropha C91: implications for niche adaptation.</title>
        <authorList>
            <person name="Stein L.Y."/>
            <person name="Arp D.J."/>
            <person name="Berube P.M."/>
            <person name="Chain P.S."/>
            <person name="Hauser L."/>
            <person name="Jetten M.S."/>
            <person name="Klotz M.G."/>
            <person name="Larimer F.W."/>
            <person name="Norton J.M."/>
            <person name="Op den Camp H.J.M."/>
            <person name="Shin M."/>
            <person name="Wei X."/>
        </authorList>
    </citation>
    <scope>NUCLEOTIDE SEQUENCE [LARGE SCALE GENOMIC DNA]</scope>
    <source>
        <strain>DSM 101675 / C91 / Nm57</strain>
    </source>
</reference>
<protein>
    <recommendedName>
        <fullName evidence="1">3-hydroxyacyl-[acyl-carrier-protein] dehydratase FabZ</fullName>
        <ecNumber evidence="1">4.2.1.59</ecNumber>
    </recommendedName>
    <alternativeName>
        <fullName evidence="1">(3R)-hydroxymyristoyl-[acyl-carrier-protein] dehydratase</fullName>
        <shortName evidence="1">(3R)-hydroxymyristoyl-ACP dehydrase</shortName>
    </alternativeName>
    <alternativeName>
        <fullName evidence="1">Beta-hydroxyacyl-ACP dehydratase</fullName>
    </alternativeName>
</protein>
<dbReference type="EC" id="4.2.1.59" evidence="1"/>
<dbReference type="EMBL" id="CP000450">
    <property type="protein sequence ID" value="ABI60248.1"/>
    <property type="status" value="ALT_INIT"/>
    <property type="molecule type" value="Genomic_DNA"/>
</dbReference>
<dbReference type="RefSeq" id="WP_011635045.1">
    <property type="nucleotide sequence ID" value="NC_008344.1"/>
</dbReference>
<dbReference type="SMR" id="Q0AEI4"/>
<dbReference type="STRING" id="335283.Neut_2025"/>
<dbReference type="KEGG" id="net:Neut_2025"/>
<dbReference type="eggNOG" id="COG0764">
    <property type="taxonomic scope" value="Bacteria"/>
</dbReference>
<dbReference type="HOGENOM" id="CLU_078912_1_2_4"/>
<dbReference type="OrthoDB" id="9772788at2"/>
<dbReference type="Proteomes" id="UP000001966">
    <property type="component" value="Chromosome"/>
</dbReference>
<dbReference type="GO" id="GO:0005737">
    <property type="term" value="C:cytoplasm"/>
    <property type="evidence" value="ECO:0007669"/>
    <property type="project" value="UniProtKB-SubCell"/>
</dbReference>
<dbReference type="GO" id="GO:0016020">
    <property type="term" value="C:membrane"/>
    <property type="evidence" value="ECO:0007669"/>
    <property type="project" value="GOC"/>
</dbReference>
<dbReference type="GO" id="GO:0019171">
    <property type="term" value="F:(3R)-hydroxyacyl-[acyl-carrier-protein] dehydratase activity"/>
    <property type="evidence" value="ECO:0007669"/>
    <property type="project" value="UniProtKB-EC"/>
</dbReference>
<dbReference type="GO" id="GO:0006633">
    <property type="term" value="P:fatty acid biosynthetic process"/>
    <property type="evidence" value="ECO:0007669"/>
    <property type="project" value="UniProtKB-UniRule"/>
</dbReference>
<dbReference type="GO" id="GO:0009245">
    <property type="term" value="P:lipid A biosynthetic process"/>
    <property type="evidence" value="ECO:0007669"/>
    <property type="project" value="UniProtKB-UniRule"/>
</dbReference>
<dbReference type="CDD" id="cd01288">
    <property type="entry name" value="FabZ"/>
    <property type="match status" value="1"/>
</dbReference>
<dbReference type="FunFam" id="3.10.129.10:FF:000001">
    <property type="entry name" value="3-hydroxyacyl-[acyl-carrier-protein] dehydratase FabZ"/>
    <property type="match status" value="1"/>
</dbReference>
<dbReference type="Gene3D" id="3.10.129.10">
    <property type="entry name" value="Hotdog Thioesterase"/>
    <property type="match status" value="1"/>
</dbReference>
<dbReference type="HAMAP" id="MF_00406">
    <property type="entry name" value="FabZ"/>
    <property type="match status" value="1"/>
</dbReference>
<dbReference type="InterPro" id="IPR013114">
    <property type="entry name" value="FabA_FabZ"/>
</dbReference>
<dbReference type="InterPro" id="IPR010084">
    <property type="entry name" value="FabZ"/>
</dbReference>
<dbReference type="InterPro" id="IPR029069">
    <property type="entry name" value="HotDog_dom_sf"/>
</dbReference>
<dbReference type="NCBIfam" id="TIGR01750">
    <property type="entry name" value="fabZ"/>
    <property type="match status" value="1"/>
</dbReference>
<dbReference type="NCBIfam" id="NF000582">
    <property type="entry name" value="PRK00006.1"/>
    <property type="match status" value="1"/>
</dbReference>
<dbReference type="PANTHER" id="PTHR30272">
    <property type="entry name" value="3-HYDROXYACYL-[ACYL-CARRIER-PROTEIN] DEHYDRATASE"/>
    <property type="match status" value="1"/>
</dbReference>
<dbReference type="PANTHER" id="PTHR30272:SF1">
    <property type="entry name" value="3-HYDROXYACYL-[ACYL-CARRIER-PROTEIN] DEHYDRATASE"/>
    <property type="match status" value="1"/>
</dbReference>
<dbReference type="Pfam" id="PF07977">
    <property type="entry name" value="FabA"/>
    <property type="match status" value="1"/>
</dbReference>
<dbReference type="SUPFAM" id="SSF54637">
    <property type="entry name" value="Thioesterase/thiol ester dehydrase-isomerase"/>
    <property type="match status" value="1"/>
</dbReference>
<gene>
    <name evidence="1" type="primary">fabZ</name>
    <name type="ordered locus">Neut_2025</name>
</gene>
<proteinExistence type="inferred from homology"/>
<name>FABZ_NITEC</name>